<organism evidence="8">
    <name type="scientific">Streptococcus pneumoniae serotype 4 (strain ATCC BAA-334 / TIGR4)</name>
    <dbReference type="NCBI Taxonomy" id="170187"/>
    <lineage>
        <taxon>Bacteria</taxon>
        <taxon>Bacillati</taxon>
        <taxon>Bacillota</taxon>
        <taxon>Bacilli</taxon>
        <taxon>Lactobacillales</taxon>
        <taxon>Streptococcaceae</taxon>
        <taxon>Streptococcus</taxon>
    </lineage>
</organism>
<gene>
    <name evidence="8" type="ordered locus">SP_0092</name>
</gene>
<feature type="chain" id="PRO_5002599486" description="Carbohydrate ABC transporter substrate-binding protein">
    <location>
        <begin position="1"/>
        <end position="491"/>
    </location>
</feature>
<feature type="binding site" evidence="1 10">
    <location>
        <position position="212"/>
    </location>
    <ligand>
        <name>Zn(2+)</name>
        <dbReference type="ChEBI" id="CHEBI:29105"/>
    </ligand>
</feature>
<feature type="binding site" evidence="1 10">
    <location>
        <position position="247"/>
    </location>
    <ligand>
        <name>Zn(2+)</name>
        <dbReference type="ChEBI" id="CHEBI:29105"/>
    </ligand>
</feature>
<feature type="binding site" evidence="1 10">
    <location>
        <position position="252"/>
    </location>
    <ligand>
        <name>Zn(2+)</name>
        <dbReference type="ChEBI" id="CHEBI:29105"/>
    </ligand>
</feature>
<feature type="binding site" evidence="1 10">
    <location>
        <position position="256"/>
    </location>
    <ligand>
        <name>Zn(2+)</name>
        <dbReference type="ChEBI" id="CHEBI:29105"/>
    </ligand>
</feature>
<feature type="strand" evidence="11">
    <location>
        <begin position="42"/>
        <end position="49"/>
    </location>
</feature>
<feature type="helix" evidence="11">
    <location>
        <begin position="55"/>
        <end position="70"/>
    </location>
</feature>
<feature type="strand" evidence="11">
    <location>
        <begin position="73"/>
        <end position="78"/>
    </location>
</feature>
<feature type="helix" evidence="11">
    <location>
        <begin position="84"/>
        <end position="93"/>
    </location>
</feature>
<feature type="strand" evidence="11">
    <location>
        <begin position="99"/>
        <end position="102"/>
    </location>
</feature>
<feature type="helix" evidence="11">
    <location>
        <begin position="106"/>
        <end position="111"/>
    </location>
</feature>
<feature type="helix" evidence="11">
    <location>
        <begin position="121"/>
        <end position="123"/>
    </location>
</feature>
<feature type="turn" evidence="11">
    <location>
        <begin position="124"/>
        <end position="126"/>
    </location>
</feature>
<feature type="helix" evidence="11">
    <location>
        <begin position="127"/>
        <end position="131"/>
    </location>
</feature>
<feature type="helix" evidence="11">
    <location>
        <begin position="135"/>
        <end position="141"/>
    </location>
</feature>
<feature type="strand" evidence="11">
    <location>
        <begin position="156"/>
        <end position="165"/>
    </location>
</feature>
<feature type="helix" evidence="11">
    <location>
        <begin position="166"/>
        <end position="172"/>
    </location>
</feature>
<feature type="helix" evidence="11">
    <location>
        <begin position="182"/>
        <end position="195"/>
    </location>
</feature>
<feature type="strand" evidence="11">
    <location>
        <begin position="199"/>
        <end position="202"/>
    </location>
</feature>
<feature type="strand" evidence="11">
    <location>
        <begin position="213"/>
        <end position="215"/>
    </location>
</feature>
<feature type="strand" evidence="11">
    <location>
        <begin position="224"/>
        <end position="227"/>
    </location>
</feature>
<feature type="strand" evidence="11">
    <location>
        <begin position="235"/>
        <end position="237"/>
    </location>
</feature>
<feature type="helix" evidence="11">
    <location>
        <begin position="238"/>
        <end position="240"/>
    </location>
</feature>
<feature type="helix" evidence="11">
    <location>
        <begin position="242"/>
        <end position="256"/>
    </location>
</feature>
<feature type="turn" evidence="11">
    <location>
        <begin position="262"/>
        <end position="266"/>
    </location>
</feature>
<feature type="strand" evidence="11">
    <location>
        <begin position="278"/>
        <end position="285"/>
    </location>
</feature>
<feature type="helix" evidence="11">
    <location>
        <begin position="287"/>
        <end position="289"/>
    </location>
</feature>
<feature type="turn" evidence="11">
    <location>
        <begin position="290"/>
        <end position="292"/>
    </location>
</feature>
<feature type="helix" evidence="11">
    <location>
        <begin position="293"/>
        <end position="299"/>
    </location>
</feature>
<feature type="strand" evidence="11">
    <location>
        <begin position="303"/>
        <end position="309"/>
    </location>
</feature>
<feature type="helix" evidence="11">
    <location>
        <begin position="315"/>
        <end position="319"/>
    </location>
</feature>
<feature type="strand" evidence="11">
    <location>
        <begin position="320"/>
        <end position="326"/>
    </location>
</feature>
<feature type="helix" evidence="11">
    <location>
        <begin position="332"/>
        <end position="342"/>
    </location>
</feature>
<feature type="helix" evidence="11">
    <location>
        <begin position="346"/>
        <end position="353"/>
    </location>
</feature>
<feature type="turn" evidence="11">
    <location>
        <begin position="357"/>
        <end position="359"/>
    </location>
</feature>
<feature type="helix" evidence="11">
    <location>
        <begin position="385"/>
        <end position="387"/>
    </location>
</feature>
<feature type="helix" evidence="11">
    <location>
        <begin position="391"/>
        <end position="393"/>
    </location>
</feature>
<feature type="helix" evidence="11">
    <location>
        <begin position="402"/>
        <end position="414"/>
    </location>
</feature>
<feature type="turn" evidence="11">
    <location>
        <begin position="419"/>
        <end position="422"/>
    </location>
</feature>
<feature type="helix" evidence="11">
    <location>
        <begin position="428"/>
        <end position="430"/>
    </location>
</feature>
<feature type="helix" evidence="11">
    <location>
        <begin position="431"/>
        <end position="449"/>
    </location>
</feature>
<feature type="helix" evidence="11">
    <location>
        <begin position="455"/>
        <end position="467"/>
    </location>
</feature>
<feature type="helix" evidence="11">
    <location>
        <begin position="471"/>
        <end position="487"/>
    </location>
</feature>
<sequence length="491" mass="54486">MKNWKKYAFASASVVALAAGLAACGNLTGNSKKAADSGDKPVIKMYQIGDKPDNLDELLANANKIIEEKVGAKLDIQYLGWGDYGKKMSVITSSGENYDIAFADNYIVNAQKGAYADLTELYKKEGKDLYKALDPAYIKGNTVNGKIYAVPVAANVASSQNFAFNGTLLAKYGIDISGVTSYETLEPVLKQIKEKAPDVVPFAIGKVFIPSDNFDYPVANGLPFVIDLEGDTTKVVNRYEVPRFKEHLKTLHKFYEAGYIPKDVATSDTSFDLQQDTWFVREETVGPADYGNSLLSRVANKDIQIKPITNFIKKNQTTQVANFVISNNSKNKEKSMEILNLLNTNPELLNGLVYGPEGKNWEKIEGKENRVRVLDGYKGNTHMGGWNTGNNWILYINENVTDQQIENSKKELAEAKESPALGFIFNTDNVKSEISAIANTMQQFDTAINTGTVDPDKAIPELMEKLKSEGAYEKVLNEMQKQYDEFLKNKK</sequence>
<accession>A0A0H2UMY0</accession>
<keyword id="KW-0002">3D-structure</keyword>
<keyword id="KW-0479">Metal-binding</keyword>
<keyword id="KW-1185">Reference proteome</keyword>
<keyword id="KW-0762">Sugar transport</keyword>
<keyword id="KW-0813">Transport</keyword>
<keyword id="KW-0862">Zinc</keyword>
<evidence type="ECO:0000269" key="1">
    <source>
    </source>
</evidence>
<evidence type="ECO:0000269" key="2">
    <source>
    </source>
</evidence>
<evidence type="ECO:0000303" key="3">
    <source>
    </source>
</evidence>
<evidence type="ECO:0000303" key="4">
    <source>
    </source>
</evidence>
<evidence type="ECO:0000305" key="5"/>
<evidence type="ECO:0000305" key="6">
    <source>
    </source>
</evidence>
<evidence type="ECO:0000305" key="7">
    <source>
    </source>
</evidence>
<evidence type="ECO:0000312" key="8">
    <source>
        <dbReference type="EMBL" id="AAK74279.1"/>
    </source>
</evidence>
<evidence type="ECO:0000312" key="9">
    <source>
        <dbReference type="Proteomes" id="UP000000585"/>
    </source>
</evidence>
<evidence type="ECO:0007744" key="10">
    <source>
        <dbReference type="PDB" id="5MLT"/>
    </source>
</evidence>
<evidence type="ECO:0007829" key="11">
    <source>
        <dbReference type="PDB" id="5MLT"/>
    </source>
</evidence>
<protein>
    <recommendedName>
        <fullName evidence="5">Carbohydrate ABC transporter substrate-binding protein</fullName>
    </recommendedName>
    <alternativeName>
        <fullName evidence="3 4">Carbohydrate substrate-binding protein SP0092</fullName>
        <shortName evidence="3">Carbohydrate SBP SP0092</shortName>
    </alternativeName>
</protein>
<proteinExistence type="evidence at protein level"/>
<dbReference type="EMBL" id="AE005672">
    <property type="protein sequence ID" value="AAK74279.1"/>
    <property type="molecule type" value="Genomic_DNA"/>
</dbReference>
<dbReference type="RefSeq" id="WP_000800407.1">
    <property type="nucleotide sequence ID" value="NZ_CP155539.1"/>
</dbReference>
<dbReference type="PDB" id="5MLT">
    <property type="method" value="X-ray"/>
    <property type="resolution" value="1.61 A"/>
    <property type="chains" value="A=39-491"/>
</dbReference>
<dbReference type="PDBsum" id="5MLT"/>
<dbReference type="SMR" id="A0A0H2UMY0"/>
<dbReference type="PaxDb" id="170187-SP_0092"/>
<dbReference type="EnsemblBacteria" id="AAK74279">
    <property type="protein sequence ID" value="AAK74279"/>
    <property type="gene ID" value="SP_0092"/>
</dbReference>
<dbReference type="KEGG" id="spn:SP_0092"/>
<dbReference type="eggNOG" id="COG1653">
    <property type="taxonomic scope" value="Bacteria"/>
</dbReference>
<dbReference type="PhylomeDB" id="A0A0H2UMY0"/>
<dbReference type="BioCyc" id="SPNE170187:G1FZB-96-MONOMER"/>
<dbReference type="Proteomes" id="UP000000585">
    <property type="component" value="Chromosome"/>
</dbReference>
<dbReference type="GO" id="GO:0055052">
    <property type="term" value="C:ATP-binding cassette (ABC) transporter complex, substrate-binding subunit-containing"/>
    <property type="evidence" value="ECO:0000303"/>
    <property type="project" value="UniProtKB"/>
</dbReference>
<dbReference type="GO" id="GO:0010339">
    <property type="term" value="C:external side of cell wall"/>
    <property type="evidence" value="ECO:0000303"/>
    <property type="project" value="UniProtKB"/>
</dbReference>
<dbReference type="GO" id="GO:0042803">
    <property type="term" value="F:protein homodimerization activity"/>
    <property type="evidence" value="ECO:0000314"/>
    <property type="project" value="UniProtKB"/>
</dbReference>
<dbReference type="GO" id="GO:0008270">
    <property type="term" value="F:zinc ion binding"/>
    <property type="evidence" value="ECO:0000314"/>
    <property type="project" value="UniProtKB"/>
</dbReference>
<dbReference type="GO" id="GO:0098704">
    <property type="term" value="P:carbohydrate import across plasma membrane"/>
    <property type="evidence" value="ECO:0000303"/>
    <property type="project" value="UniProtKB"/>
</dbReference>
<dbReference type="GO" id="GO:0051289">
    <property type="term" value="P:protein homotetramerization"/>
    <property type="evidence" value="ECO:0000314"/>
    <property type="project" value="UniProtKB"/>
</dbReference>
<dbReference type="GO" id="GO:0070207">
    <property type="term" value="P:protein homotrimerization"/>
    <property type="evidence" value="ECO:0000314"/>
    <property type="project" value="UniProtKB"/>
</dbReference>
<dbReference type="Gene3D" id="3.40.190.10">
    <property type="entry name" value="Periplasmic binding protein-like II"/>
    <property type="match status" value="1"/>
</dbReference>
<dbReference type="InterPro" id="IPR050490">
    <property type="entry name" value="Bact_solute-bd_prot1"/>
</dbReference>
<dbReference type="InterPro" id="IPR022627">
    <property type="entry name" value="DUF3502"/>
</dbReference>
<dbReference type="InterPro" id="IPR006059">
    <property type="entry name" value="SBP"/>
</dbReference>
<dbReference type="PANTHER" id="PTHR43649:SF17">
    <property type="entry name" value="ABC TRANSPORTER SOLUTE BINDING PROTEIN-SUGAR TRANSPORT"/>
    <property type="match status" value="1"/>
</dbReference>
<dbReference type="PANTHER" id="PTHR43649">
    <property type="entry name" value="ARABINOSE-BINDING PROTEIN-RELATED"/>
    <property type="match status" value="1"/>
</dbReference>
<dbReference type="Pfam" id="PF12010">
    <property type="entry name" value="DUF3502"/>
    <property type="match status" value="1"/>
</dbReference>
<dbReference type="Pfam" id="PF13416">
    <property type="entry name" value="SBP_bac_8"/>
    <property type="match status" value="1"/>
</dbReference>
<dbReference type="SUPFAM" id="SSF53850">
    <property type="entry name" value="Periplasmic binding protein-like II"/>
    <property type="match status" value="1"/>
</dbReference>
<name>SBP92_STRPN</name>
<reference evidence="8 9" key="1">
    <citation type="journal article" date="2001" name="Science">
        <title>Complete genome sequence of a virulent isolate of Streptococcus pneumoniae.</title>
        <authorList>
            <person name="Tettelin H."/>
            <person name="Nelson K.E."/>
            <person name="Paulsen I.T."/>
            <person name="Eisen J.A."/>
            <person name="Read T.D."/>
            <person name="Peterson S.N."/>
            <person name="Heidelberg J.F."/>
            <person name="DeBoy R.T."/>
            <person name="Haft D.H."/>
            <person name="Dodson R.J."/>
            <person name="Durkin A.S."/>
            <person name="Gwinn M.L."/>
            <person name="Kolonay J.F."/>
            <person name="Nelson W.C."/>
            <person name="Peterson J.D."/>
            <person name="Umayam L.A."/>
            <person name="White O."/>
            <person name="Salzberg S.L."/>
            <person name="Lewis M.R."/>
            <person name="Radune D."/>
            <person name="Holtzapple E.K."/>
            <person name="Khouri H.M."/>
            <person name="Wolf A.M."/>
            <person name="Utterback T.R."/>
            <person name="Hansen C.L."/>
            <person name="McDonald L.A."/>
            <person name="Feldblyum T.V."/>
            <person name="Angiuoli S.V."/>
            <person name="Dickinson T."/>
            <person name="Hickey E.K."/>
            <person name="Holt I.E."/>
            <person name="Loftus B.J."/>
            <person name="Yang F."/>
            <person name="Smith H.O."/>
            <person name="Venter J.C."/>
            <person name="Dougherty B.A."/>
            <person name="Morrison D.A."/>
            <person name="Hollingshead S.K."/>
            <person name="Fraser C.M."/>
        </authorList>
    </citation>
    <scope>NUCLEOTIDE SEQUENCE [LARGE SCALE GENOMIC DNA]</scope>
    <source>
        <strain>ATCC BAA-334 / TIGR4</strain>
    </source>
</reference>
<reference key="2">
    <citation type="journal article" date="2017" name="J. Vis. Exp.">
        <title>Biochemical and Structural Characterization of the Carbohydrate Transport Substrate-binding-protein SP0092.</title>
        <authorList>
            <person name="Culurgioni S."/>
            <person name="Tang M."/>
            <person name="Hall D.R."/>
            <person name="Walsh M.A."/>
        </authorList>
    </citation>
    <scope>CRYSTALLIZATION</scope>
    <scope>FUNCTION</scope>
    <scope>SUBUNIT</scope>
    <scope>SUBCELLULAR LOCATION</scope>
    <scope>BIOTECHNOLOGY</scope>
</reference>
<reference evidence="10" key="3">
    <citation type="journal article" date="2017" name="Acta Crystallogr. F">
        <title>Structural characterization of the Streptococcus pneumoniae carbohydrate substrate-binding protein SP0092.</title>
        <authorList>
            <person name="Culurgioni S."/>
            <person name="Tang M."/>
            <person name="Walsh M.A."/>
        </authorList>
    </citation>
    <scope>X-RAY CRYSTALLOGRAPHY (1.61 ANGSTROMS) OF 39-491 IN COMPLEX WITH ZINC</scope>
    <scope>FUNCTION</scope>
    <scope>SUBUNIT</scope>
    <source>
        <strain evidence="3">ATCC BAA-334 / TIGR4</strain>
    </source>
</reference>
<comment type="function">
    <text evidence="6 7">Probably part of an ABC transporter complex involved in carbohydrate transport.</text>
</comment>
<comment type="subunit">
    <text evidence="1 2">Exists as a monomer, homodimer, homotrimer and homotetramer; oligomerization increases with higher protein concentration.</text>
</comment>
<comment type="subcellular location">
    <subcellularLocation>
        <location evidence="7">Cell surface</location>
    </subcellularLocation>
</comment>
<comment type="biotechnology">
    <text evidence="7">This protein has potential use in the development of vaccines and antimicrobials against pneumococcus, because of its extracellular localization and the essentiality of carbohydrate import for the pneumococcal metabolism. The characterization protocol developed for this protein can be helpful in structure-based design of inhibitors for the carbohydrate-binding proteins in general.</text>
</comment>
<comment type="similarity">
    <text evidence="5">Belongs to the bacterial solute-binding protein 1 family.</text>
</comment>